<name>MAM1_YEAST</name>
<protein>
    <recommendedName>
        <fullName>Monopolin complex subunit MAM1</fullName>
    </recommendedName>
    <alternativeName>
        <fullName>Monopolar microtubule attachment during meiosis 1 protein 1</fullName>
    </alternativeName>
</protein>
<proteinExistence type="evidence at protein level"/>
<accession>P40065</accession>
<accession>D3DM13</accession>
<accession>E9P8Y3</accession>
<sequence length="302" mass="35753">MREKRTISNKDTNYLKFPNKLQRYSRFLSRKISNTSPEKQPKKNIKEHCLSSYHKEHSVKPKQNSGNVAAKEDKDTQHLQNNVANEEATECLTRSNLKKLQEKIFDRELNDIACDHCLCSTENRRDIKYSRLWFLFELEMSENWNENLRLSCYNKYVYSAIDESWKMENILLKEQEKHYEYFPIGQLLIPNNIDYTNKQKRKENIEDLTIEIDSIIETNHQKKRFLPQSVLIKREDEIAFDDFHLDARKVLNDLSATSENPFSSSPNTKKIKSKGKTLEVVPKKKNKKIIGALERKLHIDEN</sequence>
<gene>
    <name type="primary">MAM1</name>
    <name type="ordered locus">YER106W</name>
</gene>
<dbReference type="EMBL" id="U18839">
    <property type="protein sequence ID" value="AAB64661.1"/>
    <property type="molecule type" value="Genomic_DNA"/>
</dbReference>
<dbReference type="EMBL" id="AY692881">
    <property type="protein sequence ID" value="AAT92900.1"/>
    <property type="molecule type" value="Genomic_DNA"/>
</dbReference>
<dbReference type="EMBL" id="BK006939">
    <property type="protein sequence ID" value="DAA07767.1"/>
    <property type="molecule type" value="Genomic_DNA"/>
</dbReference>
<dbReference type="PIR" id="S50609">
    <property type="entry name" value="S50609"/>
</dbReference>
<dbReference type="RefSeq" id="NP_011032.1">
    <property type="nucleotide sequence ID" value="NM_001178997.1"/>
</dbReference>
<dbReference type="PDB" id="5CYZ">
    <property type="method" value="X-ray"/>
    <property type="resolution" value="1.84 A"/>
    <property type="chains" value="C=87-191"/>
</dbReference>
<dbReference type="PDB" id="5CZO">
    <property type="method" value="X-ray"/>
    <property type="resolution" value="2.89 A"/>
    <property type="chains" value="C/D=87-191"/>
</dbReference>
<dbReference type="PDB" id="5KTB">
    <property type="method" value="X-ray"/>
    <property type="resolution" value="3.05 A"/>
    <property type="chains" value="C=221-290"/>
</dbReference>
<dbReference type="PDBsum" id="5CYZ"/>
<dbReference type="PDBsum" id="5CZO"/>
<dbReference type="PDBsum" id="5KTB"/>
<dbReference type="SMR" id="P40065"/>
<dbReference type="BioGRID" id="36852">
    <property type="interactions" value="83"/>
</dbReference>
<dbReference type="ComplexPortal" id="CPX-1681">
    <property type="entry name" value="Monopolin complex"/>
</dbReference>
<dbReference type="DIP" id="DIP-5402N"/>
<dbReference type="FunCoup" id="P40065">
    <property type="interactions" value="161"/>
</dbReference>
<dbReference type="IntAct" id="P40065">
    <property type="interactions" value="3"/>
</dbReference>
<dbReference type="STRING" id="4932.YER106W"/>
<dbReference type="iPTMnet" id="P40065"/>
<dbReference type="PaxDb" id="4932-YER106W"/>
<dbReference type="PeptideAtlas" id="P40065"/>
<dbReference type="EnsemblFungi" id="YER106W_mRNA">
    <property type="protein sequence ID" value="YER106W"/>
    <property type="gene ID" value="YER106W"/>
</dbReference>
<dbReference type="GeneID" id="856843"/>
<dbReference type="KEGG" id="sce:YER106W"/>
<dbReference type="AGR" id="SGD:S000000908"/>
<dbReference type="SGD" id="S000000908">
    <property type="gene designation" value="MAM1"/>
</dbReference>
<dbReference type="VEuPathDB" id="FungiDB:YER106W"/>
<dbReference type="eggNOG" id="ENOG502S889">
    <property type="taxonomic scope" value="Eukaryota"/>
</dbReference>
<dbReference type="HOGENOM" id="CLU_928146_0_0_1"/>
<dbReference type="InParanoid" id="P40065"/>
<dbReference type="OMA" id="SENWNEN"/>
<dbReference type="OrthoDB" id="4070446at2759"/>
<dbReference type="BioCyc" id="YEAST:G3O-30271-MONOMER"/>
<dbReference type="BioGRID-ORCS" id="856843">
    <property type="hits" value="7 hits in 10 CRISPR screens"/>
</dbReference>
<dbReference type="PRO" id="PR:P40065"/>
<dbReference type="Proteomes" id="UP000002311">
    <property type="component" value="Chromosome V"/>
</dbReference>
<dbReference type="RNAct" id="P40065">
    <property type="molecule type" value="protein"/>
</dbReference>
<dbReference type="GO" id="GO:0000776">
    <property type="term" value="C:kinetochore"/>
    <property type="evidence" value="ECO:0000314"/>
    <property type="project" value="SGD"/>
</dbReference>
<dbReference type="GO" id="GO:0033551">
    <property type="term" value="C:monopolin complex"/>
    <property type="evidence" value="ECO:0000314"/>
    <property type="project" value="SGD"/>
</dbReference>
<dbReference type="GO" id="GO:0005634">
    <property type="term" value="C:nucleus"/>
    <property type="evidence" value="ECO:0007669"/>
    <property type="project" value="UniProtKB-SubCell"/>
</dbReference>
<dbReference type="GO" id="GO:0045143">
    <property type="term" value="P:homologous chromosome segregation"/>
    <property type="evidence" value="ECO:0000315"/>
    <property type="project" value="SGD"/>
</dbReference>
<dbReference type="GO" id="GO:0045132">
    <property type="term" value="P:meiotic chromosome segregation"/>
    <property type="evidence" value="ECO:0000315"/>
    <property type="project" value="SGD"/>
</dbReference>
<dbReference type="GO" id="GO:0010789">
    <property type="term" value="P:meiotic sister chromatid cohesion involved in meiosis I"/>
    <property type="evidence" value="ECO:0000315"/>
    <property type="project" value="SGD"/>
</dbReference>
<dbReference type="GO" id="GO:0051455">
    <property type="term" value="P:spindle attachment to meiosis I kinetochore"/>
    <property type="evidence" value="ECO:0000315"/>
    <property type="project" value="SGD"/>
</dbReference>
<dbReference type="Gene3D" id="6.10.250.3400">
    <property type="match status" value="1"/>
</dbReference>
<dbReference type="InterPro" id="IPR018847">
    <property type="entry name" value="Monopolin_cplx_su_Mam1"/>
</dbReference>
<dbReference type="Pfam" id="PF10434">
    <property type="entry name" value="MAM1"/>
    <property type="match status" value="1"/>
</dbReference>
<evidence type="ECO:0000256" key="1">
    <source>
        <dbReference type="SAM" id="MobiDB-lite"/>
    </source>
</evidence>
<evidence type="ECO:0000269" key="2">
    <source>
    </source>
</evidence>
<evidence type="ECO:0000269" key="3">
    <source>
    </source>
</evidence>
<evidence type="ECO:0000269" key="4">
    <source>
    </source>
</evidence>
<evidence type="ECO:0000269" key="5">
    <source>
    </source>
</evidence>
<evidence type="ECO:0000269" key="6">
    <source>
    </source>
</evidence>
<evidence type="ECO:0000269" key="7">
    <source>
    </source>
</evidence>
<evidence type="ECO:0000269" key="8">
    <source>
    </source>
</evidence>
<evidence type="ECO:0000269" key="9">
    <source>
    </source>
</evidence>
<evidence type="ECO:0000305" key="10"/>
<evidence type="ECO:0007829" key="11">
    <source>
        <dbReference type="PDB" id="5CYZ"/>
    </source>
</evidence>
<evidence type="ECO:0007829" key="12">
    <source>
        <dbReference type="PDB" id="5CZO"/>
    </source>
</evidence>
<evidence type="ECO:0007829" key="13">
    <source>
        <dbReference type="PDB" id="5KTB"/>
    </source>
</evidence>
<feature type="chain" id="PRO_0000202645" description="Monopolin complex subunit MAM1">
    <location>
        <begin position="1"/>
        <end position="302"/>
    </location>
</feature>
<feature type="region of interest" description="Disordered" evidence="1">
    <location>
        <begin position="53"/>
        <end position="83"/>
    </location>
</feature>
<feature type="region of interest" description="Disordered" evidence="1">
    <location>
        <begin position="257"/>
        <end position="276"/>
    </location>
</feature>
<feature type="compositionally biased region" description="Polar residues" evidence="1">
    <location>
        <begin position="257"/>
        <end position="268"/>
    </location>
</feature>
<feature type="sequence conflict" description="In Ref. 3; AAT92900." evidence="10" ref="3">
    <original>K</original>
    <variation>E</variation>
    <location>
        <position position="202"/>
    </location>
</feature>
<feature type="helix" evidence="11">
    <location>
        <begin position="94"/>
        <end position="98"/>
    </location>
</feature>
<feature type="helix" evidence="11">
    <location>
        <begin position="101"/>
        <end position="110"/>
    </location>
</feature>
<feature type="turn" evidence="11">
    <location>
        <begin position="117"/>
        <end position="119"/>
    </location>
</feature>
<feature type="helix" evidence="11">
    <location>
        <begin position="121"/>
        <end position="126"/>
    </location>
</feature>
<feature type="helix" evidence="11">
    <location>
        <begin position="130"/>
        <end position="134"/>
    </location>
</feature>
<feature type="helix" evidence="11">
    <location>
        <begin position="137"/>
        <end position="139"/>
    </location>
</feature>
<feature type="strand" evidence="11">
    <location>
        <begin position="141"/>
        <end position="146"/>
    </location>
</feature>
<feature type="helix" evidence="11">
    <location>
        <begin position="148"/>
        <end position="151"/>
    </location>
</feature>
<feature type="helix" evidence="11">
    <location>
        <begin position="158"/>
        <end position="161"/>
    </location>
</feature>
<feature type="helix" evidence="11">
    <location>
        <begin position="170"/>
        <end position="172"/>
    </location>
</feature>
<feature type="strand" evidence="12">
    <location>
        <begin position="177"/>
        <end position="179"/>
    </location>
</feature>
<feature type="helix" evidence="11">
    <location>
        <begin position="184"/>
        <end position="187"/>
    </location>
</feature>
<feature type="helix" evidence="13">
    <location>
        <begin position="231"/>
        <end position="233"/>
    </location>
</feature>
<feature type="helix" evidence="13">
    <location>
        <begin position="234"/>
        <end position="237"/>
    </location>
</feature>
<feature type="helix" evidence="13">
    <location>
        <begin position="240"/>
        <end position="242"/>
    </location>
</feature>
<feature type="helix" evidence="13">
    <location>
        <begin position="247"/>
        <end position="253"/>
    </location>
</feature>
<organism>
    <name type="scientific">Saccharomyces cerevisiae (strain ATCC 204508 / S288c)</name>
    <name type="common">Baker's yeast</name>
    <dbReference type="NCBI Taxonomy" id="559292"/>
    <lineage>
        <taxon>Eukaryota</taxon>
        <taxon>Fungi</taxon>
        <taxon>Dikarya</taxon>
        <taxon>Ascomycota</taxon>
        <taxon>Saccharomycotina</taxon>
        <taxon>Saccharomycetes</taxon>
        <taxon>Saccharomycetales</taxon>
        <taxon>Saccharomycetaceae</taxon>
        <taxon>Saccharomyces</taxon>
    </lineage>
</organism>
<keyword id="KW-0002">3D-structure</keyword>
<keyword id="KW-0469">Meiosis</keyword>
<keyword id="KW-0539">Nucleus</keyword>
<keyword id="KW-0597">Phosphoprotein</keyword>
<keyword id="KW-1185">Reference proteome</keyword>
<reference key="1">
    <citation type="journal article" date="1997" name="Nature">
        <title>The nucleotide sequence of Saccharomyces cerevisiae chromosome V.</title>
        <authorList>
            <person name="Dietrich F.S."/>
            <person name="Mulligan J.T."/>
            <person name="Hennessy K.M."/>
            <person name="Yelton M.A."/>
            <person name="Allen E."/>
            <person name="Araujo R."/>
            <person name="Aviles E."/>
            <person name="Berno A."/>
            <person name="Brennan T."/>
            <person name="Carpenter J."/>
            <person name="Chen E."/>
            <person name="Cherry J.M."/>
            <person name="Chung E."/>
            <person name="Duncan M."/>
            <person name="Guzman E."/>
            <person name="Hartzell G."/>
            <person name="Hunicke-Smith S."/>
            <person name="Hyman R.W."/>
            <person name="Kayser A."/>
            <person name="Komp C."/>
            <person name="Lashkari D."/>
            <person name="Lew H."/>
            <person name="Lin D."/>
            <person name="Mosedale D."/>
            <person name="Nakahara K."/>
            <person name="Namath A."/>
            <person name="Norgren R."/>
            <person name="Oefner P."/>
            <person name="Oh C."/>
            <person name="Petel F.X."/>
            <person name="Roberts D."/>
            <person name="Sehl P."/>
            <person name="Schramm S."/>
            <person name="Shogren T."/>
            <person name="Smith V."/>
            <person name="Taylor P."/>
            <person name="Wei Y."/>
            <person name="Botstein D."/>
            <person name="Davis R.W."/>
        </authorList>
    </citation>
    <scope>NUCLEOTIDE SEQUENCE [LARGE SCALE GENOMIC DNA]</scope>
    <source>
        <strain>ATCC 204508 / S288c</strain>
    </source>
</reference>
<reference key="2">
    <citation type="journal article" date="2014" name="G3 (Bethesda)">
        <title>The reference genome sequence of Saccharomyces cerevisiae: Then and now.</title>
        <authorList>
            <person name="Engel S.R."/>
            <person name="Dietrich F.S."/>
            <person name="Fisk D.G."/>
            <person name="Binkley G."/>
            <person name="Balakrishnan R."/>
            <person name="Costanzo M.C."/>
            <person name="Dwight S.S."/>
            <person name="Hitz B.C."/>
            <person name="Karra K."/>
            <person name="Nash R.S."/>
            <person name="Weng S."/>
            <person name="Wong E.D."/>
            <person name="Lloyd P."/>
            <person name="Skrzypek M.S."/>
            <person name="Miyasato S.R."/>
            <person name="Simison M."/>
            <person name="Cherry J.M."/>
        </authorList>
    </citation>
    <scope>GENOME REANNOTATION</scope>
    <source>
        <strain>ATCC 204508 / S288c</strain>
    </source>
</reference>
<reference key="3">
    <citation type="journal article" date="2007" name="Genome Res.">
        <title>Approaching a complete repository of sequence-verified protein-encoding clones for Saccharomyces cerevisiae.</title>
        <authorList>
            <person name="Hu Y."/>
            <person name="Rolfs A."/>
            <person name="Bhullar B."/>
            <person name="Murthy T.V.S."/>
            <person name="Zhu C."/>
            <person name="Berger M.F."/>
            <person name="Camargo A.A."/>
            <person name="Kelley F."/>
            <person name="McCarron S."/>
            <person name="Jepson D."/>
            <person name="Richardson A."/>
            <person name="Raphael J."/>
            <person name="Moreira D."/>
            <person name="Taycher E."/>
            <person name="Zuo D."/>
            <person name="Mohr S."/>
            <person name="Kane M.F."/>
            <person name="Williamson J."/>
            <person name="Simpson A.J.G."/>
            <person name="Bulyk M.L."/>
            <person name="Harlow E."/>
            <person name="Marsischky G."/>
            <person name="Kolodner R.D."/>
            <person name="LaBaer J."/>
        </authorList>
    </citation>
    <scope>NUCLEOTIDE SEQUENCE [GENOMIC DNA]</scope>
    <source>
        <strain>ATCC 204508 / S288c</strain>
    </source>
</reference>
<reference key="4">
    <citation type="journal article" date="2000" name="Cell">
        <title>Functional genomics identifies monopolin: a kinetochore protein required for segregation of homologs during meiosis I.</title>
        <authorList>
            <person name="Toth A."/>
            <person name="Rabitsch K.P."/>
            <person name="Galova M."/>
            <person name="Schleiffer A."/>
            <person name="Buonomo S.B.C."/>
            <person name="Nasmyth K."/>
        </authorList>
    </citation>
    <scope>FUNCTION</scope>
    <scope>SUBCELLULAR LOCATION</scope>
</reference>
<reference key="5">
    <citation type="journal article" date="2001" name="Curr. Biol.">
        <title>A screen for genes required for meiosis and spore formation based on whole-genome expression.</title>
        <authorList>
            <person name="Rabitsch K.P."/>
            <person name="Toth A."/>
            <person name="Galova M."/>
            <person name="Schleiffer A."/>
            <person name="Schaffner G."/>
            <person name="Aigner E."/>
            <person name="Rupp C."/>
            <person name="Penkner A.M."/>
            <person name="Moreno-Borchart A.C."/>
            <person name="Primig M."/>
            <person name="Esposito R.E."/>
            <person name="Klein F."/>
            <person name="Knop M."/>
            <person name="Nasmyth K."/>
        </authorList>
    </citation>
    <scope>FUNCTION</scope>
</reference>
<reference key="6">
    <citation type="journal article" date="2003" name="Dev. Cell">
        <title>Kinetochore recruitment of two nucleolar proteins is required for homolog segregation in meiosis I.</title>
        <authorList>
            <person name="Rabitsch K.P."/>
            <person name="Petronczki M."/>
            <person name="Javerzat J.-P."/>
            <person name="Genier S."/>
            <person name="Chwalla B."/>
            <person name="Schleiffer A."/>
            <person name="Tanaka T.U."/>
            <person name="Nasmyth K."/>
        </authorList>
    </citation>
    <scope>FUNCTION</scope>
    <scope>SUBCELLULAR LOCATION</scope>
    <scope>IDENTIFICATION IN THE MONOPOLIN COMPLEX</scope>
</reference>
<reference key="7">
    <citation type="journal article" date="2003" name="Genetics">
        <title>Large-scale functional genomic analysis of sporulation and meiosis in Saccharomyces cerevisiae.</title>
        <authorList>
            <person name="Enyenihi A.H."/>
            <person name="Saunders W.S."/>
        </authorList>
    </citation>
    <scope>FUNCTION</scope>
</reference>
<reference key="8">
    <citation type="journal article" date="2003" name="Nat. Cell Biol.">
        <title>Polo-like kinase Cdc5 promotes chiasmata formation and cosegregation of sister centromeres at meiosis I.</title>
        <authorList>
            <person name="Clyne R.K."/>
            <person name="Katis V.L."/>
            <person name="Jessop L."/>
            <person name="Benjamin K.R."/>
            <person name="Herskowitz I."/>
            <person name="Lichten M."/>
            <person name="Nasmyth K."/>
        </authorList>
    </citation>
    <scope>FUNCTION</scope>
    <scope>SUBCELLULAR LOCATION</scope>
    <scope>PHOSPHORYLATION</scope>
</reference>
<reference key="9">
    <citation type="journal article" date="2003" name="Science">
        <title>Role of Polo-like kinase CDC5 in programming meiosis I chromosome segregation.</title>
        <authorList>
            <person name="Lee B.H."/>
            <person name="Amon A."/>
        </authorList>
    </citation>
    <scope>FUNCTION</scope>
    <scope>SUBCELLULAR LOCATION</scope>
    <scope>PHOSPHORYLATION</scope>
</reference>
<reference key="10">
    <citation type="journal article" date="2004" name="Curr. Biol.">
        <title>Spo13 facilitates monopolin recruitment to kinetochores and regulates maintenance of centromeric cohesion during yeast meiosis.</title>
        <authorList>
            <person name="Katis V.L."/>
            <person name="Matos J."/>
            <person name="Mori S."/>
            <person name="Shirahige K."/>
            <person name="Zachariae W."/>
            <person name="Nasmyth K."/>
        </authorList>
    </citation>
    <scope>FUNCTION</scope>
    <scope>SUBCELLULAR LOCATION</scope>
</reference>
<reference key="11">
    <citation type="journal article" date="2004" name="J. Cell Sci.">
        <title>Sister-chromatid cohesion mediated by the alternative RF-CCtf18/Dcc1/Ctf8, the helicase Chl1 and the polymerase-alpha-associated protein Ctf4 is essential for chromatid disjunction during meiosis II.</title>
        <authorList>
            <person name="Petronczki M."/>
            <person name="Chwalla B."/>
            <person name="Siomos M.F."/>
            <person name="Yokobayashi S."/>
            <person name="Helmhart W."/>
            <person name="Deutschbauer A.M."/>
            <person name="Davis R.W."/>
            <person name="Watanabe Y."/>
            <person name="Nasmyth K."/>
        </authorList>
    </citation>
    <scope>FUNCTION</scope>
</reference>
<comment type="function">
    <text evidence="2 3 4 5 6 7 8 9">Component of the monopolin complex which promotes monoorientation during meiosis I, required for chromosome segregation during meiosis.</text>
</comment>
<comment type="subunit">
    <text evidence="6">Component of the monopolin complex composed of at least CSM1, LRS4 and MAM1. The complex associates with the kinetochore during late pachytene.</text>
</comment>
<comment type="interaction">
    <interactant intactId="EBI-22643">
        <id>P40065</id>
    </interactant>
    <interactant intactId="EBI-22001">
        <id>P25651</id>
        <label>CSM1</label>
    </interactant>
    <organismsDiffer>false</organismsDiffer>
    <experiments>7</experiments>
</comment>
<comment type="interaction">
    <interactant intactId="EBI-22643">
        <id>P40065</id>
    </interactant>
    <interactant intactId="EBI-8536">
        <id>P29295</id>
        <label>HRR25</label>
    </interactant>
    <organismsDiffer>false</organismsDiffer>
    <experiments>3</experiments>
</comment>
<comment type="subcellular location">
    <subcellularLocation>
        <location evidence="2 5 6 7 9">Nucleus</location>
    </subcellularLocation>
    <text>Localizes to kinechores during late pachytene.</text>
</comment>
<comment type="PTM">
    <text evidence="5 7">Phosphorylated by CDC5. This phosphorylation is required for the location to the kinetochores during late pachytene.</text>
</comment>